<comment type="function">
    <text>Activates the 3rd to 6th amino acids (Ala, D-Leu, Ala and D-Val) in linear gramicidin and catalyzes the formation of the peptide bond between them. This enzyme is also responsible for the epimerization of the 4th (D-Leu) and the 6th (D-Val) amino acids.</text>
</comment>
<comment type="cofactor">
    <cofactor evidence="2">
        <name>pantetheine 4'-phosphate</name>
        <dbReference type="ChEBI" id="CHEBI:47942"/>
    </cofactor>
    <text evidence="2">Binds 4 phosphopantetheines covalently.</text>
</comment>
<comment type="biophysicochemical properties">
    <kinetics>
        <KM>2.2 mM for glycine</KM>
        <KM>1.5 mM for alanine</KM>
    </kinetics>
</comment>
<comment type="subunit">
    <text>Large multienzyme complex composed of 4 subunits; LgrA, LgrB, LgrC and LgrD.</text>
</comment>
<comment type="domain">
    <text>Four module-bearing peptide synthase with a C-terminal epimerization domain. Each module incorporates one amino acid into the peptide product and can be further subdivided into domains responsible for substrate adenylation, thiolation, condensation (not for the initiation module), and epimerization (optional).</text>
</comment>
<comment type="miscellaneous">
    <text>Linear gramicidin is a pentadecapeptide antibiotic produced during sporulation.</text>
</comment>
<comment type="similarity">
    <text evidence="2">Belongs to the ATP-dependent AMP-binding enzyme family.</text>
</comment>
<name>LGRB_BREPA</name>
<sequence length="5162" mass="577904">MSRKKVDNIYPLTPMQEGMLFHSLLDEGSESYFEQMRFTIKGLIDPAILEQSLNALIERHDILRTVFLLEKVQKPRQIVLRERKTKVQVLDITHLSEGEQAAYLEDFAQKDRQASFDLAKDVLIRLTLVRTSADTHTLFWSHHHILLDGWCIPIVLNDFFQIYQQRKGGLPVELGPVYPYSTYISWLGEQDAEEAKASWAEYISGYEPTSFIHKQGGKNSYRQAELVFAIEQGLTDSLNKLAKQLHVTLNNLFRAIWGLMLQRQCNTEDVVFGSVVSGRPSHLPNVEQMVGLFINTVPIRVQAGAEQTFSELVKQVQQEALSLAKYHYLSLADIQGNQQLIDHILLFQNYPMGQQFLTRLNQYNEEFTLTHLSAFEQTNYDLNVMVTPSDVITIKYIYNAAVFSEEQLLHISRQLTTIMTQVTNAPDILLQKLEVVDPAEKQLQLHSFNDTYRHYPTDKLIHQIFEERAEREPERIALVMGEQVLTYRELNEKANQLAKLLRARGIGPESMVSLLTERSAEMMIAILAIFKAGGAYLPIDPSHPKERIEYILQDSRSELLLVNHRFLGAVDFADRIIDLEAAEIYQGAADNLECVSHANHLAYVIYTSGSTGKPKGVMIEHASLLNIIFALQELYPLLENDAYLLKTTYTFDVSVAEIFGWILGSGRLVILDPGAEKEPAHIWETMVNHGVTHVNFVPSMLIPFVDYVRDQQQESPLRYIFAAGEAMPSELVGKVYEALPGVILENIYGPTESTIYATKYSLAKDSQDVLVPIGKPLANIQTHIVNKHGQLQPVGVPGELCIAGASLARGYWNNEALTNEKFVPHPFAAGQRMYRTGDLARYRQDGNIEYLGRIDHQVKIRGYRIELDEIRAQLIQEASIRDAVVIARTDHNGQAYLCAYFIADKQWTVNALREALRQTLPDYMVPSHFIQMEEFPLTSSGKIDRKALPLPDGRVHTGNVYLAPRNPVEELVVRIWEEVLNVSQVGVHDNFFELGGHSLLATQVLSRTAKLFHVRLPMREIFTHQTVAELARRIQALRHGAEADKHSPIQPSALQRADELPLSYAQQRLWFLDRLIPDSAMYNIPVGFRLRGTVDELVLERALNEIIQRHESLRTTFVDVDGRALQVIHTDVHLSLGVTDLRDKPAAAKDAEWKQMAEEDAATPFRLDQWPLLRAMLIRLEEQESVLWLNVHHIISDGWSMDVLVNELSEVYETLLKGEALPLAALPIQYRDYAVWQREKSQDDVWKEQLRYWKNKLDGSEPLLPLPTDRPRAVVQSYRGDHLSFYVPGEVGQKLRELGRQEGATLFMTLLAAFKSFLYRYTHANDILIGTPVAGRNRQEIENLIGFFVNMLVLRTDLSDDPTFVELLRRVRETAFDAFANEDVPFEKLVDELQIERSLSYSPLFQVLFAVQGMSTGVREGETLAIAPDEVTLNQTTKFDLTLTMIEAADNGLKGVFEYSTDLFDRTTIERMAEHFGNLLQAIAADPGQKIVELPLLGGAEQSRMLVEWNQTDVAYSLDLLVHERVARIAQELPEQFAVIGEQGALTYAQLDAKANQLAHALLKRGIGSEDLVGICVERSSEMQIGQLAILKAGAAYVPMDPAYPRERLAFMIKDAGMSLVLTQERLLDALPQEAAALLCLDRDWQEIAAESTAAPAIKTNADQLAYVIYTSGSTGTPKGVEIEHGSLLNLVNWHQRAYSVSAEDRASQIAGTAFDASVWETWPYLTAGATICQPREEIRLSPEKLRDWLVETGITISFLPTPLAENLLPLPWPTGAALRYMLTGGDTLHQYPTADVPFTLVNQYGPTENTVVATAGAVPVLGERESAPTIGRPIDNVSVYVLDENRQPVPVGVVGELYIGGKSLARGYRNRPDLTEASFVPNPFSPIEGARMYRTGDLVRYAADGSIEFIGRADDQVSIRGFRVELGEIESALYAHPAVAESVVIVREDVTPGVKRLVAYAVLHEGEERQTSELRQSLKEMLPDYMVPSAIVLMEALPLTPNGKVDRRALPLPDVAQTEWEGSFVEPQSDVERKLAEIWQEVLGVETIGVHDNFFELGGDSILTIQIVSRANQAGLQLTPKHLFDAQTLAELAASAVVLEKAPEMQAEQGIVTGELPLTPIQTWFFEQDVRHVHHWNQSVMLAVREELDMTALTQAFAALPRQHDALRLRFQQVNGTWQAAHGEIADEDVLLVADLSSVPEAEREARMRHITDELQASLDIEKGPLHRAAYFQLGAEQRLFIVIHHLVVDGVSWRIILEDLQTAYEQVKAGQKIAWPQKTTSFKSWAEELTTYAEQSAVDEYWTGMDSEQACGLPVDHPQGKNTEGLAVQVKAKLSADETRALLQEVPAAYRTQINDVLLSALTRTITDWTNKRALYVSVEGHGREPIVDGVDVSRTVGWFTSLYPVLLETEPDLAWGDLLKSIKEQVRAIPDKGIGYGIHRYLSRDGQTAEMLRAKPQPEISFNYLGQFGQGQTTDAALFQIIPNWSASNVSEDETRLYKLDVMSMVAQDQLEMSWTFSRDLYEPGTIEKLAHDYVQALRAIIAHCRTEQAGGYTPSDFPLAELDQNSLDKFIGHNRLIENVYTLTPLQEGMLFHSLYEQAGGDYVVQLALKLEHVNVEAFSAAWQKVVERHAILRTSFLWSGLEKPHQVVHAKVKTFVERLDWRHLTAAEQEAGLQTYLEQDRKRGFDLARPPLMRWTLIRLDASTFQFVWSFHHMLLDGWSTPIVFQDWQAFYAAASHGKEASLPAIPPFSAYIAWLKRQNLEEAQQYWRDYLQGFGVPTPLGMGKSGGSAGQPKEYADHKLLLSERATANLLAFARKHQLTLNTVVQGAWALILARYAGEAEVVFGTTNLGRPTDLPDAEAMVGLFINTLPVRVLFPEQTTVIDWLQSLQQAQSEMRQYEFTPLVDIQSWSEVPRGQSLFDSIFVFENYLSGTSVDSESGMLLGEVKAVEQTSYPLTLVVAPGEELMLKLIYETGRFEQPAMDKVLAQLSSVLEAIMREPHEQLADLSIITEAERHKLLVEWNATDMPYERNLVMHQLFEAQVEATPDAQALVVGTERLTYAELNKRANQLAHYLRAQGVGPEVLVAVLMERTTEMIVALLGIIKAGGAYVPIDPAYPQDRIGYTLDDSQAAIVLTQERLLPMLPEHTAQVICLDRDWACMAVQPEANVPNLAAPTNLSYVIYTSGSTGLPKGVAIQHSSVIAFIFWAKTVFSAEEMSGVLASTSICFDLSVYEIFVTLSCGGKVILADNALHLPSLPAAKEVTLINTVPSAAKELVRMNAIPPSVRVVNLAGEPLPNTLAQSLYALGHVQKVFNLYGPSEDTTYSTYVQVTKGAKTEPTIGRPLANTQAYVLDAKLQPVPLGLPGELYLGGDGLARGYLKRPKMTAERFLPNPFHPDPDARMYSTGDLVRYLPDGQLEYLGRIDHQVKIRGYRIELGELEAVLRSHPQIKEAVVVAKEDKLGEKRLVAYITTKDGECGDRAVLTSWAKAKLPEFMVPSFFVWLDAMPLTPNGKIDRKQLPEPEWGQVASAAGYVAPRNQTEVLVASIWADVLGIEQVGVHDNFFELGGHSLLATRVASRLRETFAKEVPIRAIFERPTVAELSETLGAIGQNETEAQMLPVSREAHLPLSFAQQRLWFLDRLMPDSTLYNIPSAVRLLGDLDIAAWEKSLQVLIQRHESLRTTFGDVDGEAVQVIHSRLDGKLNVIDLRGMPADEREAEAHRLAGLEAATPFDLSQGPLLRTTLIRLAEQECVFLFNLHHIIFDGWSIGIFLKEMRALYEAFVREEAPELAEITVQYADYAVWQRKWLEGEVLAEQLAYWKEKLSGAEPLLALPTDQPRPAVQTHDGAMHTIKLSGELYAKLNKLSQEEGATLFMTLLAAFQVLLYRYSGQEDILVGSPVAGRNRQETEPLIGFFINTLVLRTDLSGEPTFRELLARVRETAFEAYAHQDLPFEKLVDELELERSLSYSPLFQVMFVLQNFQLNLDEKAGIRVADFEMDKHLVTSKYDLTLTMAEKQNGLFATFEYNTALFHEATMERLSQHFIQLLEAIVHMPDQGIARLPLLNQSERAQLLVEWNDTTTAYPRNKRVDQLFRETALLYPERLAVVAGNQTLTYAELERRANQTANYLQQKGVRPGALVGLCVKRSLEMLIGMLGILKAGGAYVPLDPDYPEERLAYMMGDAGITVLLTQEQLMPGLPSGERTTIALDRDWPLIAKESEQAPDVDTTAESLAYVIYTSGSTGLPKGTLVVHRGIVRLVKETDYVTITEQDVFLQASTVSFDAATFEIWGSLLNGAKLVLLPPELPSLAEIGQAIQSHHVTTLWLTAGLFTLMVDHHKEYLSGVRQLLVGGDIVSVPHVKKALEIAGLTVINGYGPTENTTFTCCNPVTVMPESAHTFPIGRPIKNTTAYVLDRHMQPVPIGVTGELYIGGDGLAEGYLNRPDLTAERFVPNPFATDQAARLYRTGDLVRYLPDGLIEFIGRLDNQVKIRGFRIELSEVEAVLAKHPAITASVVIVHENEAGMKQLVAYAVKDAEQELGTAELRQHFKAHVPDYMVPAAFVMLDALPLTPNGKVDRKALPAPVLERSREEDAFAAATSHVEQTLADIWCAVLRMDRIGIHDNFFELGGDSILSIQIVARANKAGIHLTPKQLFDQQTIAELAKVAGQSTKVDAEQGNVTGEVPLLPIQTWFFEQKQPTPHHWNQSMLLQVNEPLEEECLSQAVAQLLAHHDALRLRYTFADGQWKQTYADVDSEVPLQVEDLSMSPPAQQARKIEKLAQQAQASLDLQNGPLLKVVYFDLGYDRPGRLLMVIHHLAVDGVSWRILIEDLQTAYGQAEKGNKIQLPPKTTSYKAWAEKLHKYASSERMLVDQDYWLKAADELSGHPLPVHDWAENTEANGRMWTIHLEEEETDALLQKVPSRYRVQINDILLTALALAYGKWTGESALLVNLEGHGREELFEDVDLSRTVGWFTSMYPLLIQLEPNTSSEDALARVKEKLQQIPHKGLGYGLLRYMAQDPELVEKLKAIPQAPLSFNYLGQFHQAADAKALLAYAEGERGANSGPDNRRTHLIDVVGAVTEGKLGLSFLYNGRLYSESHIETFARHYTDALQSLIQAEKQSYRAEDFEDADLSQSALNKVLARLKNRKGNELHGGSH</sequence>
<protein>
    <recommendedName>
        <fullName>Linear gramicidin synthase subunit B</fullName>
    </recommendedName>
    <domain>
        <recommendedName>
            <fullName>ATP-dependent D-leucine adenylase</fullName>
            <shortName>D-LeuA</shortName>
        </recommendedName>
        <alternativeName>
            <fullName>D-leucine activase</fullName>
        </alternativeName>
    </domain>
    <domain>
        <recommendedName>
            <fullName>Leucine racemase [ATP-hydrolyzing]</fullName>
            <ecNumber>5.1.1.-</ecNumber>
        </recommendedName>
    </domain>
    <domain>
        <recommendedName>
            <fullName>ATP-dependent alanine adenylase</fullName>
            <shortName>AlaA</shortName>
        </recommendedName>
        <alternativeName>
            <fullName>Alanine activase</fullName>
        </alternativeName>
    </domain>
    <domain>
        <recommendedName>
            <fullName>ATP-dependent D-valine adenylase</fullName>
            <shortName>D-ValA</shortName>
        </recommendedName>
        <alternativeName>
            <fullName>D-valine activase</fullName>
        </alternativeName>
    </domain>
    <domain>
        <recommendedName>
            <fullName>Valine racemase [ATP-hydrolyzing]</fullName>
            <ecNumber>5.1.1.-</ecNumber>
        </recommendedName>
    </domain>
</protein>
<proteinExistence type="evidence at protein level"/>
<evidence type="ECO:0000255" key="1">
    <source>
        <dbReference type="PROSITE-ProRule" id="PRU00258"/>
    </source>
</evidence>
<evidence type="ECO:0000305" key="2"/>
<organism>
    <name type="scientific">Brevibacillus parabrevis</name>
    <dbReference type="NCBI Taxonomy" id="54914"/>
    <lineage>
        <taxon>Bacteria</taxon>
        <taxon>Bacillati</taxon>
        <taxon>Bacillota</taxon>
        <taxon>Bacilli</taxon>
        <taxon>Bacillales</taxon>
        <taxon>Paenibacillaceae</taxon>
        <taxon>Brevibacillus</taxon>
    </lineage>
</organism>
<reference key="1">
    <citation type="journal article" date="2004" name="J. Biol. Chem.">
        <title>The linear pentadecapeptide gramicidin is assembled by four multimodular nonribosomal peptide synthetases that comprise 16 modules with 57 catalytic domains.</title>
        <authorList>
            <person name="Kessler N."/>
            <person name="Schuhmann H."/>
            <person name="Morneweg S."/>
            <person name="Linne U."/>
            <person name="Marahiel M.A."/>
        </authorList>
    </citation>
    <scope>NUCLEOTIDE SEQUENCE [GENOMIC DNA]</scope>
    <source>
        <strain>ATCC 8185 / DSM 362 / JCM 20017 / IAM 1031 / NBRC 3331 / NCDO 717 / NCIMB 8598 / NRS 751 / BG</strain>
    </source>
</reference>
<gene>
    <name type="primary">lgrB</name>
</gene>
<keyword id="KW-0045">Antibiotic biosynthesis</keyword>
<keyword id="KW-0413">Isomerase</keyword>
<keyword id="KW-0436">Ligase</keyword>
<keyword id="KW-0511">Multifunctional enzyme</keyword>
<keyword id="KW-0596">Phosphopantetheine</keyword>
<keyword id="KW-0597">Phosphoprotein</keyword>
<keyword id="KW-0677">Repeat</keyword>
<dbReference type="EC" id="5.1.1.-"/>
<dbReference type="EMBL" id="AJ566197">
    <property type="protein sequence ID" value="CAD92850.1"/>
    <property type="molecule type" value="Genomic_DNA"/>
</dbReference>
<dbReference type="SMR" id="Q70LM6"/>
<dbReference type="GO" id="GO:0005829">
    <property type="term" value="C:cytosol"/>
    <property type="evidence" value="ECO:0007669"/>
    <property type="project" value="TreeGrafter"/>
</dbReference>
<dbReference type="GO" id="GO:0016853">
    <property type="term" value="F:isomerase activity"/>
    <property type="evidence" value="ECO:0007669"/>
    <property type="project" value="UniProtKB-KW"/>
</dbReference>
<dbReference type="GO" id="GO:0016874">
    <property type="term" value="F:ligase activity"/>
    <property type="evidence" value="ECO:0007669"/>
    <property type="project" value="UniProtKB-KW"/>
</dbReference>
<dbReference type="GO" id="GO:0031177">
    <property type="term" value="F:phosphopantetheine binding"/>
    <property type="evidence" value="ECO:0007669"/>
    <property type="project" value="InterPro"/>
</dbReference>
<dbReference type="GO" id="GO:0043041">
    <property type="term" value="P:amino acid activation for nonribosomal peptide biosynthetic process"/>
    <property type="evidence" value="ECO:0007669"/>
    <property type="project" value="TreeGrafter"/>
</dbReference>
<dbReference type="GO" id="GO:0017000">
    <property type="term" value="P:antibiotic biosynthetic process"/>
    <property type="evidence" value="ECO:0007669"/>
    <property type="project" value="UniProtKB-KW"/>
</dbReference>
<dbReference type="GO" id="GO:0008610">
    <property type="term" value="P:lipid biosynthetic process"/>
    <property type="evidence" value="ECO:0007669"/>
    <property type="project" value="UniProtKB-ARBA"/>
</dbReference>
<dbReference type="GO" id="GO:0044550">
    <property type="term" value="P:secondary metabolite biosynthetic process"/>
    <property type="evidence" value="ECO:0007669"/>
    <property type="project" value="TreeGrafter"/>
</dbReference>
<dbReference type="CDD" id="cd05930">
    <property type="entry name" value="A_NRPS"/>
    <property type="match status" value="1"/>
</dbReference>
<dbReference type="CDD" id="cd12115">
    <property type="entry name" value="A_NRPS_Sfm_like"/>
    <property type="match status" value="1"/>
</dbReference>
<dbReference type="CDD" id="cd12117">
    <property type="entry name" value="A_NRPS_Srf_like"/>
    <property type="match status" value="1"/>
</dbReference>
<dbReference type="CDD" id="cd17651">
    <property type="entry name" value="A_NRPS_VisG_like"/>
    <property type="match status" value="1"/>
</dbReference>
<dbReference type="CDD" id="cd19543">
    <property type="entry name" value="DCL_NRPS"/>
    <property type="match status" value="2"/>
</dbReference>
<dbReference type="CDD" id="cd19534">
    <property type="entry name" value="E_NRPS"/>
    <property type="match status" value="2"/>
</dbReference>
<dbReference type="CDD" id="cd19531">
    <property type="entry name" value="LCL_NRPS-like"/>
    <property type="match status" value="2"/>
</dbReference>
<dbReference type="FunFam" id="3.30.300.30:FF:000010">
    <property type="entry name" value="Enterobactin synthetase component F"/>
    <property type="match status" value="4"/>
</dbReference>
<dbReference type="FunFam" id="3.30.559.10:FF:000012">
    <property type="entry name" value="Non-ribosomal peptide synthetase"/>
    <property type="match status" value="3"/>
</dbReference>
<dbReference type="FunFam" id="3.30.559.30:FF:000001">
    <property type="entry name" value="Non-ribosomal peptide synthetase"/>
    <property type="match status" value="1"/>
</dbReference>
<dbReference type="FunFam" id="3.40.50.12780:FF:000012">
    <property type="entry name" value="Non-ribosomal peptide synthetase"/>
    <property type="match status" value="4"/>
</dbReference>
<dbReference type="FunFam" id="3.40.50.980:FF:000001">
    <property type="entry name" value="Non-ribosomal peptide synthetase"/>
    <property type="match status" value="4"/>
</dbReference>
<dbReference type="FunFam" id="2.30.38.10:FF:000001">
    <property type="entry name" value="Non-ribosomal peptide synthetase PvdI"/>
    <property type="match status" value="4"/>
</dbReference>
<dbReference type="FunFam" id="3.30.559.10:FF:000016">
    <property type="entry name" value="Nonribosomal peptide synthase Pes1"/>
    <property type="match status" value="1"/>
</dbReference>
<dbReference type="FunFam" id="1.10.1200.10:FF:000005">
    <property type="entry name" value="Nonribosomal peptide synthetase 1"/>
    <property type="match status" value="4"/>
</dbReference>
<dbReference type="Gene3D" id="3.30.300.30">
    <property type="match status" value="4"/>
</dbReference>
<dbReference type="Gene3D" id="3.40.50.980">
    <property type="match status" value="8"/>
</dbReference>
<dbReference type="Gene3D" id="1.10.1200.10">
    <property type="entry name" value="ACP-like"/>
    <property type="match status" value="4"/>
</dbReference>
<dbReference type="Gene3D" id="3.30.559.10">
    <property type="entry name" value="Chloramphenicol acetyltransferase-like domain"/>
    <property type="match status" value="6"/>
</dbReference>
<dbReference type="Gene3D" id="2.30.38.10">
    <property type="entry name" value="Luciferase, Domain 3"/>
    <property type="match status" value="4"/>
</dbReference>
<dbReference type="Gene3D" id="3.30.559.30">
    <property type="entry name" value="Nonribosomal peptide synthetase, condensation domain"/>
    <property type="match status" value="6"/>
</dbReference>
<dbReference type="InterPro" id="IPR010071">
    <property type="entry name" value="AA_adenyl_dom"/>
</dbReference>
<dbReference type="InterPro" id="IPR036736">
    <property type="entry name" value="ACP-like_sf"/>
</dbReference>
<dbReference type="InterPro" id="IPR025110">
    <property type="entry name" value="AMP-bd_C"/>
</dbReference>
<dbReference type="InterPro" id="IPR045851">
    <property type="entry name" value="AMP-bd_C_sf"/>
</dbReference>
<dbReference type="InterPro" id="IPR020845">
    <property type="entry name" value="AMP-binding_CS"/>
</dbReference>
<dbReference type="InterPro" id="IPR000873">
    <property type="entry name" value="AMP-dep_synth/lig_dom"/>
</dbReference>
<dbReference type="InterPro" id="IPR023213">
    <property type="entry name" value="CAT-like_dom_sf"/>
</dbReference>
<dbReference type="InterPro" id="IPR001242">
    <property type="entry name" value="Condensatn"/>
</dbReference>
<dbReference type="InterPro" id="IPR010060">
    <property type="entry name" value="NRPS_synth"/>
</dbReference>
<dbReference type="InterPro" id="IPR020806">
    <property type="entry name" value="PKS_PP-bd"/>
</dbReference>
<dbReference type="InterPro" id="IPR009081">
    <property type="entry name" value="PP-bd_ACP"/>
</dbReference>
<dbReference type="InterPro" id="IPR006162">
    <property type="entry name" value="Ppantetheine_attach_site"/>
</dbReference>
<dbReference type="NCBIfam" id="TIGR01733">
    <property type="entry name" value="AA-adenyl-dom"/>
    <property type="match status" value="4"/>
</dbReference>
<dbReference type="NCBIfam" id="TIGR01720">
    <property type="entry name" value="NRPS-para261"/>
    <property type="match status" value="2"/>
</dbReference>
<dbReference type="NCBIfam" id="NF003417">
    <property type="entry name" value="PRK04813.1"/>
    <property type="match status" value="4"/>
</dbReference>
<dbReference type="NCBIfam" id="NF004282">
    <property type="entry name" value="PRK05691.1"/>
    <property type="match status" value="3"/>
</dbReference>
<dbReference type="PANTHER" id="PTHR45527">
    <property type="entry name" value="NONRIBOSOMAL PEPTIDE SYNTHETASE"/>
    <property type="match status" value="1"/>
</dbReference>
<dbReference type="PANTHER" id="PTHR45527:SF14">
    <property type="entry name" value="PLIPASTATIN SYNTHASE SUBUNIT B"/>
    <property type="match status" value="1"/>
</dbReference>
<dbReference type="Pfam" id="PF00501">
    <property type="entry name" value="AMP-binding"/>
    <property type="match status" value="4"/>
</dbReference>
<dbReference type="Pfam" id="PF13193">
    <property type="entry name" value="AMP-binding_C"/>
    <property type="match status" value="4"/>
</dbReference>
<dbReference type="Pfam" id="PF00668">
    <property type="entry name" value="Condensation"/>
    <property type="match status" value="6"/>
</dbReference>
<dbReference type="Pfam" id="PF00550">
    <property type="entry name" value="PP-binding"/>
    <property type="match status" value="4"/>
</dbReference>
<dbReference type="SMART" id="SM00823">
    <property type="entry name" value="PKS_PP"/>
    <property type="match status" value="4"/>
</dbReference>
<dbReference type="SUPFAM" id="SSF56801">
    <property type="entry name" value="Acetyl-CoA synthetase-like"/>
    <property type="match status" value="4"/>
</dbReference>
<dbReference type="SUPFAM" id="SSF47336">
    <property type="entry name" value="ACP-like"/>
    <property type="match status" value="4"/>
</dbReference>
<dbReference type="SUPFAM" id="SSF52777">
    <property type="entry name" value="CoA-dependent acyltransferases"/>
    <property type="match status" value="12"/>
</dbReference>
<dbReference type="PROSITE" id="PS00455">
    <property type="entry name" value="AMP_BINDING"/>
    <property type="match status" value="4"/>
</dbReference>
<dbReference type="PROSITE" id="PS50075">
    <property type="entry name" value="CARRIER"/>
    <property type="match status" value="4"/>
</dbReference>
<dbReference type="PROSITE" id="PS00012">
    <property type="entry name" value="PHOSPHOPANTETHEINE"/>
    <property type="match status" value="3"/>
</dbReference>
<feature type="chain" id="PRO_0000193090" description="Linear gramicidin synthase subunit B">
    <location>
        <begin position="1"/>
        <end position="5162"/>
    </location>
</feature>
<feature type="domain" description="Carrier 1" evidence="1">
    <location>
        <begin position="963"/>
        <end position="1038"/>
    </location>
</feature>
<feature type="domain" description="Carrier 2" evidence="1">
    <location>
        <begin position="2027"/>
        <end position="2101"/>
    </location>
</feature>
<feature type="domain" description="Carrier 3" evidence="1">
    <location>
        <begin position="3541"/>
        <end position="3616"/>
    </location>
</feature>
<feature type="domain" description="Carrier 4" evidence="1">
    <location>
        <begin position="4601"/>
        <end position="4675"/>
    </location>
</feature>
<feature type="modified residue" description="O-(pantetheine 4'-phosphoryl)serine" evidence="1">
    <location>
        <position position="998"/>
    </location>
</feature>
<feature type="modified residue" description="O-(pantetheine 4'-phosphoryl)serine" evidence="1">
    <location>
        <position position="2062"/>
    </location>
</feature>
<feature type="modified residue" description="O-(pantetheine 4'-phosphoryl)serine" evidence="1">
    <location>
        <position position="3576"/>
    </location>
</feature>
<feature type="modified residue" description="O-(pantetheine 4'-phosphoryl)serine" evidence="1">
    <location>
        <position position="4636"/>
    </location>
</feature>
<accession>Q70LM6</accession>